<gene>
    <name type="primary">TBR</name>
    <name type="ordered locus">At5g06700</name>
    <name type="ORF">MPH15.5</name>
</gene>
<name>TBR_ARATH</name>
<proteinExistence type="evidence at protein level"/>
<accession>Q9FG35</accession>
<accession>D9I8D9</accession>
<accession>Q8LEF8</accession>
<protein>
    <recommendedName>
        <fullName>Protein trichome birefringence</fullName>
    </recommendedName>
</protein>
<feature type="chain" id="PRO_0000425366" description="Protein trichome birefringence">
    <location>
        <begin position="1"/>
        <end position="608"/>
    </location>
</feature>
<feature type="transmembrane region" description="Helical; Signal-anchor for type II membrane protein" evidence="2">
    <location>
        <begin position="38"/>
        <end position="58"/>
    </location>
</feature>
<feature type="region of interest" description="Disordered" evidence="3">
    <location>
        <begin position="101"/>
        <end position="236"/>
    </location>
</feature>
<feature type="short sequence motif" description="GDS motif">
    <location>
        <begin position="328"/>
        <end position="330"/>
    </location>
</feature>
<feature type="short sequence motif" description="DCXHWCLPGXXDXWN motif">
    <location>
        <begin position="573"/>
        <end position="587"/>
    </location>
</feature>
<feature type="compositionally biased region" description="Polar residues" evidence="3">
    <location>
        <begin position="101"/>
        <end position="137"/>
    </location>
</feature>
<feature type="compositionally biased region" description="Polar residues" evidence="3">
    <location>
        <begin position="145"/>
        <end position="203"/>
    </location>
</feature>
<feature type="compositionally biased region" description="Low complexity" evidence="3">
    <location>
        <begin position="215"/>
        <end position="227"/>
    </location>
</feature>
<feature type="mutagenesis site" description="Reduced crystalline cellulose in trichomes." evidence="4">
    <original>G</original>
    <variation>E</variation>
    <location>
        <position position="427"/>
    </location>
</feature>
<keyword id="KW-0472">Membrane</keyword>
<keyword id="KW-1185">Reference proteome</keyword>
<keyword id="KW-0735">Signal-anchor</keyword>
<keyword id="KW-0812">Transmembrane</keyword>
<keyword id="KW-1133">Transmembrane helix</keyword>
<reference key="1">
    <citation type="journal article" date="2010" name="Plant Physiol.">
        <title>TRICHOME BIREFRINGENCE and its homolog AT5G01360 encode plant-specific DUF231 proteins required for cellulose biosynthesis in Arabidopsis.</title>
        <authorList>
            <person name="Bischoff V."/>
            <person name="Nita S."/>
            <person name="Neumetzler L."/>
            <person name="Schindelasch D."/>
            <person name="Urbain A."/>
            <person name="Eshed R."/>
            <person name="Persson S."/>
            <person name="Delmer D."/>
            <person name="Scheible W.R."/>
        </authorList>
    </citation>
    <scope>NUCLEOTIDE SEQUENCE [GENOMIC DNA]</scope>
    <scope>FUNCTION</scope>
    <scope>MUTAGENESIS OF GLY-427</scope>
    <scope>TISSUE SPECIFICITY</scope>
    <scope>GENE FAMILY</scope>
    <scope>NOMENCLATURE</scope>
</reference>
<reference key="2">
    <citation type="submission" date="2000-05" db="EMBL/GenBank/DDBJ databases">
        <title>Structural analysis of Arabidopsis thaliana chromosome 5. XI.</title>
        <authorList>
            <person name="Kaneko T."/>
            <person name="Katoh T."/>
            <person name="Asamizu E."/>
            <person name="Sato S."/>
            <person name="Nakamura Y."/>
            <person name="Kotani H."/>
            <person name="Tabata S."/>
        </authorList>
    </citation>
    <scope>NUCLEOTIDE SEQUENCE [LARGE SCALE GENOMIC DNA]</scope>
    <source>
        <strain>cv. Columbia</strain>
    </source>
</reference>
<reference key="3">
    <citation type="journal article" date="2017" name="Plant J.">
        <title>Araport11: a complete reannotation of the Arabidopsis thaliana reference genome.</title>
        <authorList>
            <person name="Cheng C.Y."/>
            <person name="Krishnakumar V."/>
            <person name="Chan A.P."/>
            <person name="Thibaud-Nissen F."/>
            <person name="Schobel S."/>
            <person name="Town C.D."/>
        </authorList>
    </citation>
    <scope>GENOME REANNOTATION</scope>
    <source>
        <strain>cv. Columbia</strain>
    </source>
</reference>
<reference key="4">
    <citation type="submission" date="2006-07" db="EMBL/GenBank/DDBJ databases">
        <title>Large-scale analysis of RIKEN Arabidopsis full-length (RAFL) cDNAs.</title>
        <authorList>
            <person name="Totoki Y."/>
            <person name="Seki M."/>
            <person name="Ishida J."/>
            <person name="Nakajima M."/>
            <person name="Enju A."/>
            <person name="Kamiya A."/>
            <person name="Narusaka M."/>
            <person name="Shin-i T."/>
            <person name="Nakagawa M."/>
            <person name="Sakamoto N."/>
            <person name="Oishi K."/>
            <person name="Kohara Y."/>
            <person name="Kobayashi M."/>
            <person name="Toyoda A."/>
            <person name="Sakaki Y."/>
            <person name="Sakurai T."/>
            <person name="Iida K."/>
            <person name="Akiyama K."/>
            <person name="Satou M."/>
            <person name="Toyoda T."/>
            <person name="Konagaya A."/>
            <person name="Carninci P."/>
            <person name="Kawai J."/>
            <person name="Hayashizaki Y."/>
            <person name="Shinozaki K."/>
        </authorList>
    </citation>
    <scope>NUCLEOTIDE SEQUENCE [LARGE SCALE MRNA]</scope>
    <source>
        <strain>cv. Columbia</strain>
    </source>
</reference>
<reference key="5">
    <citation type="submission" date="2002-03" db="EMBL/GenBank/DDBJ databases">
        <title>Full-length cDNA from Arabidopsis thaliana.</title>
        <authorList>
            <person name="Brover V.V."/>
            <person name="Troukhan M.E."/>
            <person name="Alexandrov N.A."/>
            <person name="Lu Y.-P."/>
            <person name="Flavell R.B."/>
            <person name="Feldmann K.A."/>
        </authorList>
    </citation>
    <scope>NUCLEOTIDE SEQUENCE [LARGE SCALE MRNA] OF 280-608</scope>
</reference>
<reference key="6">
    <citation type="journal article" date="2007" name="Plant J.">
        <title>Arabidopsis ESK1 encodes a novel regulator of freezing tolerance.</title>
        <authorList>
            <person name="Xin Z."/>
            <person name="Mandaokar A."/>
            <person name="Chen J."/>
            <person name="Last R.L."/>
            <person name="Browse J."/>
        </authorList>
    </citation>
    <scope>GENE FAMILY</scope>
    <source>
        <strain>cv. Columbia</strain>
    </source>
</reference>
<reference key="7">
    <citation type="journal article" date="2010" name="Plant Signal. Behav.">
        <title>Involvement of TBL/DUF231 proteins into cell wall biology.</title>
        <authorList>
            <person name="Bischoff V."/>
            <person name="Selbig J."/>
            <person name="Scheible W.R."/>
        </authorList>
    </citation>
    <scope>3D-STRUCTURE MODELING</scope>
    <scope>FUNCTION</scope>
</reference>
<evidence type="ECO:0000250" key="1">
    <source>
        <dbReference type="UniProtKB" id="Q9LY46"/>
    </source>
</evidence>
<evidence type="ECO:0000255" key="2"/>
<evidence type="ECO:0000256" key="3">
    <source>
        <dbReference type="SAM" id="MobiDB-lite"/>
    </source>
</evidence>
<evidence type="ECO:0000269" key="4">
    <source>
    </source>
</evidence>
<evidence type="ECO:0000305" key="5"/>
<evidence type="ECO:0000305" key="6">
    <source>
    </source>
</evidence>
<evidence type="ECO:0000305" key="7">
    <source>
    </source>
</evidence>
<dbReference type="EMBL" id="HM120873">
    <property type="protein sequence ID" value="ADI48429.1"/>
    <property type="molecule type" value="Genomic_DNA"/>
</dbReference>
<dbReference type="EMBL" id="AP002032">
    <property type="protein sequence ID" value="BAB09804.1"/>
    <property type="molecule type" value="Genomic_DNA"/>
</dbReference>
<dbReference type="EMBL" id="CP002688">
    <property type="protein sequence ID" value="AED91052.1"/>
    <property type="molecule type" value="Genomic_DNA"/>
</dbReference>
<dbReference type="EMBL" id="AK229444">
    <property type="protein sequence ID" value="BAF01304.1"/>
    <property type="molecule type" value="mRNA"/>
</dbReference>
<dbReference type="EMBL" id="AY085444">
    <property type="protein sequence ID" value="AAM67355.1"/>
    <property type="molecule type" value="mRNA"/>
</dbReference>
<dbReference type="RefSeq" id="NP_568173.2">
    <property type="nucleotide sequence ID" value="NM_120753.4"/>
</dbReference>
<dbReference type="SMR" id="Q9FG35"/>
<dbReference type="FunCoup" id="Q9FG35">
    <property type="interactions" value="147"/>
</dbReference>
<dbReference type="STRING" id="3702.Q9FG35"/>
<dbReference type="PaxDb" id="3702-AT5G06700.1"/>
<dbReference type="ProMEX" id="Q9FG35"/>
<dbReference type="ProteomicsDB" id="233017"/>
<dbReference type="EnsemblPlants" id="AT5G06700.1">
    <property type="protein sequence ID" value="AT5G06700.1"/>
    <property type="gene ID" value="AT5G06700"/>
</dbReference>
<dbReference type="GeneID" id="830559"/>
<dbReference type="Gramene" id="AT5G06700.1">
    <property type="protein sequence ID" value="AT5G06700.1"/>
    <property type="gene ID" value="AT5G06700"/>
</dbReference>
<dbReference type="KEGG" id="ath:AT5G06700"/>
<dbReference type="Araport" id="AT5G06700"/>
<dbReference type="TAIR" id="AT5G06700">
    <property type="gene designation" value="TBR"/>
</dbReference>
<dbReference type="eggNOG" id="ENOG502QVEF">
    <property type="taxonomic scope" value="Eukaryota"/>
</dbReference>
<dbReference type="HOGENOM" id="CLU_020953_5_0_1"/>
<dbReference type="InParanoid" id="Q9FG35"/>
<dbReference type="OMA" id="KEYPPKM"/>
<dbReference type="PhylomeDB" id="Q9FG35"/>
<dbReference type="PRO" id="PR:Q9FG35"/>
<dbReference type="Proteomes" id="UP000006548">
    <property type="component" value="Chromosome 5"/>
</dbReference>
<dbReference type="ExpressionAtlas" id="Q9FG35">
    <property type="expression patterns" value="baseline and differential"/>
</dbReference>
<dbReference type="GO" id="GO:0005768">
    <property type="term" value="C:endosome"/>
    <property type="evidence" value="ECO:0007005"/>
    <property type="project" value="TAIR"/>
</dbReference>
<dbReference type="GO" id="GO:0005794">
    <property type="term" value="C:Golgi apparatus"/>
    <property type="evidence" value="ECO:0007005"/>
    <property type="project" value="TAIR"/>
</dbReference>
<dbReference type="GO" id="GO:0016020">
    <property type="term" value="C:membrane"/>
    <property type="evidence" value="ECO:0007669"/>
    <property type="project" value="UniProtKB-SubCell"/>
</dbReference>
<dbReference type="GO" id="GO:0005802">
    <property type="term" value="C:trans-Golgi network"/>
    <property type="evidence" value="ECO:0007005"/>
    <property type="project" value="TAIR"/>
</dbReference>
<dbReference type="GO" id="GO:0016413">
    <property type="term" value="F:O-acetyltransferase activity"/>
    <property type="evidence" value="ECO:0007669"/>
    <property type="project" value="InterPro"/>
</dbReference>
<dbReference type="GO" id="GO:0030244">
    <property type="term" value="P:cellulose biosynthetic process"/>
    <property type="evidence" value="ECO:0000315"/>
    <property type="project" value="TAIR"/>
</dbReference>
<dbReference type="GO" id="GO:0045489">
    <property type="term" value="P:pectin biosynthetic process"/>
    <property type="evidence" value="ECO:0000315"/>
    <property type="project" value="TAIR"/>
</dbReference>
<dbReference type="GO" id="GO:0009827">
    <property type="term" value="P:plant-type cell wall modification"/>
    <property type="evidence" value="ECO:0000315"/>
    <property type="project" value="TAIR"/>
</dbReference>
<dbReference type="InterPro" id="IPR029962">
    <property type="entry name" value="TBL"/>
</dbReference>
<dbReference type="InterPro" id="IPR026057">
    <property type="entry name" value="TBL_C"/>
</dbReference>
<dbReference type="InterPro" id="IPR025846">
    <property type="entry name" value="TBL_N"/>
</dbReference>
<dbReference type="PANTHER" id="PTHR32285:SF22">
    <property type="entry name" value="PROTEIN TRICHOME BIREFRINGENCE"/>
    <property type="match status" value="1"/>
</dbReference>
<dbReference type="PANTHER" id="PTHR32285">
    <property type="entry name" value="PROTEIN TRICHOME BIREFRINGENCE-LIKE 9-RELATED"/>
    <property type="match status" value="1"/>
</dbReference>
<dbReference type="Pfam" id="PF13839">
    <property type="entry name" value="PC-Esterase"/>
    <property type="match status" value="1"/>
</dbReference>
<dbReference type="Pfam" id="PF14416">
    <property type="entry name" value="PMR5N"/>
    <property type="match status" value="1"/>
</dbReference>
<organism>
    <name type="scientific">Arabidopsis thaliana</name>
    <name type="common">Mouse-ear cress</name>
    <dbReference type="NCBI Taxonomy" id="3702"/>
    <lineage>
        <taxon>Eukaryota</taxon>
        <taxon>Viridiplantae</taxon>
        <taxon>Streptophyta</taxon>
        <taxon>Embryophyta</taxon>
        <taxon>Tracheophyta</taxon>
        <taxon>Spermatophyta</taxon>
        <taxon>Magnoliopsida</taxon>
        <taxon>eudicotyledons</taxon>
        <taxon>Gunneridae</taxon>
        <taxon>Pentapetalae</taxon>
        <taxon>rosids</taxon>
        <taxon>malvids</taxon>
        <taxon>Brassicales</taxon>
        <taxon>Brassicaceae</taxon>
        <taxon>Camelineae</taxon>
        <taxon>Arabidopsis</taxon>
    </lineage>
</organism>
<comment type="function">
    <text evidence="1 4 7">Required during cellulose deposition (PubMed:20388664). May act as a bridging protein that binds pectin and other cell wall polysaccharides. Probably involved in maintaining esterification of pectins (Probable). May be involved in the specific O-acetylation of cell wall polymers (By similarity).</text>
</comment>
<comment type="subcellular location">
    <subcellularLocation>
        <location evidence="5">Membrane</location>
        <topology evidence="5">Single-pass type II membrane protein</topology>
    </subcellularLocation>
</comment>
<comment type="tissue specificity">
    <text evidence="4">Expressed in leaf vasculature, growing part of the root, expanding inflorescence stems and trichomes.</text>
</comment>
<comment type="miscellaneous">
    <text evidence="6 7">Contains 2 motifs that are conserved in esterases, but it is unlikely that this protein belongs to the catalytically active pectin esterases (PubMed:20657172). Tbr mutants are lacking leaf and stem trichome birefringence characteristic of plant cells that contain highly ordered cellulose in their secondary walls (PubMed:20388664).</text>
</comment>
<comment type="similarity">
    <text evidence="5">Belongs to the PC-esterase family. TBL subfamily.</text>
</comment>
<sequence length="608" mass="67925">MASDAVKYMPIHGGGTTATTAADIKSFFSALKPKKTSTFAYAFVITFVSFTLFFAFSPSPNSSSPWFSNIFTSSSTTTTSDNTSGSQFSSIFSYILPNVTSTKPTNRSSDATDSLSVNATSPPLNSNSKNGTLQTPAPETHTPVAKNTTFESPIVNGTNPDAKNNTSSHPLLSDKSSTTGSNNQSRTTADTETVNRNQTTSPAPSKAPVSVDLKTNSSSNSSTASSTPKKQTKTVDLVSSVKQEIEKWSESLKNCEFFDGEWIKDDSYPLYKPGSCNLIDEQFNCITNGRPDKDFQKLKWKPKKCSLPRLNGAILLEMLRGRRLVFVGDSLNRNMWESLVCILKGSVKDETKVYEARGRHHFRGEAEYSFVFQDYNCTVEFFVSPFLVQEWEIVDKKGTKKETLRLDLVGKSSEQYKGADVIVFNTGHWWTHEKTSKGEDYYQEGSNVYHELAVLEAFRKALTTWGRWVEKNVNPAKSLVFFRGYSASHFSGGQWNSGGACDSETEPIKNDTYLTPYPSKMKVLEKVLRGMKTPVTYLNITRLTDYRKDGHPSVYRKQSLSEKEKKSPLLYQDCSHWCLPGVPDSWNEILYAELIVKLNQLSQTQRKT</sequence>